<evidence type="ECO:0000250" key="1"/>
<evidence type="ECO:0000305" key="2"/>
<gene>
    <name type="primary">flhF</name>
</gene>
<accession>O52256</accession>
<name>FLHF_PSEPU</name>
<organism>
    <name type="scientific">Pseudomonas putida</name>
    <name type="common">Arthrobacter siderocapsulatus</name>
    <dbReference type="NCBI Taxonomy" id="303"/>
    <lineage>
        <taxon>Bacteria</taxon>
        <taxon>Pseudomonadati</taxon>
        <taxon>Pseudomonadota</taxon>
        <taxon>Gammaproteobacteria</taxon>
        <taxon>Pseudomonadales</taxon>
        <taxon>Pseudomonadaceae</taxon>
        <taxon>Pseudomonas</taxon>
    </lineage>
</organism>
<reference key="1">
    <citation type="journal article" date="1998" name="FEMS Microbiol. Lett.">
        <title>Identification of a chemotaxis gene region from Pseudomonas putida.</title>
        <authorList>
            <person name="Ditty J.L."/>
            <person name="Grimm A.C."/>
            <person name="Harwood C.S."/>
        </authorList>
    </citation>
    <scope>NUCLEOTIDE SEQUENCE [GENOMIC DNA]</scope>
    <source>
        <strain>PRS2000</strain>
    </source>
</reference>
<keyword id="KW-1005">Bacterial flagellum biogenesis</keyword>
<keyword id="KW-1006">Bacterial flagellum protein export</keyword>
<keyword id="KW-1003">Cell membrane</keyword>
<keyword id="KW-0342">GTP-binding</keyword>
<keyword id="KW-0472">Membrane</keyword>
<keyword id="KW-0547">Nucleotide-binding</keyword>
<keyword id="KW-0653">Protein transport</keyword>
<keyword id="KW-0813">Transport</keyword>
<dbReference type="EMBL" id="AF031898">
    <property type="protein sequence ID" value="AAC08059.1"/>
    <property type="molecule type" value="Genomic_DNA"/>
</dbReference>
<dbReference type="RefSeq" id="WP_016498564.1">
    <property type="nucleotide sequence ID" value="NZ_UGUX01000003.1"/>
</dbReference>
<dbReference type="SMR" id="O52256"/>
<dbReference type="GeneID" id="45522957"/>
<dbReference type="GO" id="GO:0005886">
    <property type="term" value="C:plasma membrane"/>
    <property type="evidence" value="ECO:0007669"/>
    <property type="project" value="UniProtKB-SubCell"/>
</dbReference>
<dbReference type="GO" id="GO:0016887">
    <property type="term" value="F:ATP hydrolysis activity"/>
    <property type="evidence" value="ECO:0007669"/>
    <property type="project" value="InterPro"/>
</dbReference>
<dbReference type="GO" id="GO:0005525">
    <property type="term" value="F:GTP binding"/>
    <property type="evidence" value="ECO:0007669"/>
    <property type="project" value="UniProtKB-KW"/>
</dbReference>
<dbReference type="GO" id="GO:0003924">
    <property type="term" value="F:GTPase activity"/>
    <property type="evidence" value="ECO:0007669"/>
    <property type="project" value="InterPro"/>
</dbReference>
<dbReference type="GO" id="GO:0005047">
    <property type="term" value="F:signal recognition particle binding"/>
    <property type="evidence" value="ECO:0007669"/>
    <property type="project" value="TreeGrafter"/>
</dbReference>
<dbReference type="GO" id="GO:0044781">
    <property type="term" value="P:bacterial-type flagellum organization"/>
    <property type="evidence" value="ECO:0007669"/>
    <property type="project" value="UniProtKB-KW"/>
</dbReference>
<dbReference type="GO" id="GO:0015031">
    <property type="term" value="P:protein transport"/>
    <property type="evidence" value="ECO:0007669"/>
    <property type="project" value="UniProtKB-KW"/>
</dbReference>
<dbReference type="GO" id="GO:0006614">
    <property type="term" value="P:SRP-dependent cotranslational protein targeting to membrane"/>
    <property type="evidence" value="ECO:0007669"/>
    <property type="project" value="InterPro"/>
</dbReference>
<dbReference type="CDD" id="cd17873">
    <property type="entry name" value="FlhF"/>
    <property type="match status" value="1"/>
</dbReference>
<dbReference type="FunFam" id="3.40.50.300:FF:000695">
    <property type="entry name" value="Flagellar biosynthesis regulator FlhF"/>
    <property type="match status" value="1"/>
</dbReference>
<dbReference type="Gene3D" id="1.20.120.1380">
    <property type="entry name" value="Flagellar FlhF biosynthesis protein, N domain"/>
    <property type="match status" value="1"/>
</dbReference>
<dbReference type="Gene3D" id="3.40.50.300">
    <property type="entry name" value="P-loop containing nucleotide triphosphate hydrolases"/>
    <property type="match status" value="1"/>
</dbReference>
<dbReference type="InterPro" id="IPR003593">
    <property type="entry name" value="AAA+_ATPase"/>
</dbReference>
<dbReference type="InterPro" id="IPR020006">
    <property type="entry name" value="FlhF"/>
</dbReference>
<dbReference type="InterPro" id="IPR047040">
    <property type="entry name" value="FlhF__GTPase_dom"/>
</dbReference>
<dbReference type="InterPro" id="IPR027417">
    <property type="entry name" value="P-loop_NTPase"/>
</dbReference>
<dbReference type="InterPro" id="IPR000897">
    <property type="entry name" value="SRP54_GTPase_dom"/>
</dbReference>
<dbReference type="NCBIfam" id="TIGR03499">
    <property type="entry name" value="FlhF"/>
    <property type="match status" value="1"/>
</dbReference>
<dbReference type="PANTHER" id="PTHR43134:SF3">
    <property type="entry name" value="FLAGELLAR BIOSYNTHESIS PROTEIN FLHF"/>
    <property type="match status" value="1"/>
</dbReference>
<dbReference type="PANTHER" id="PTHR43134">
    <property type="entry name" value="SIGNAL RECOGNITION PARTICLE RECEPTOR SUBUNIT ALPHA"/>
    <property type="match status" value="1"/>
</dbReference>
<dbReference type="Pfam" id="PF00448">
    <property type="entry name" value="SRP54"/>
    <property type="match status" value="1"/>
</dbReference>
<dbReference type="SMART" id="SM00382">
    <property type="entry name" value="AAA"/>
    <property type="match status" value="1"/>
</dbReference>
<dbReference type="SMART" id="SM00962">
    <property type="entry name" value="SRP54"/>
    <property type="match status" value="1"/>
</dbReference>
<dbReference type="SUPFAM" id="SSF52540">
    <property type="entry name" value="P-loop containing nucleoside triphosphate hydrolases"/>
    <property type="match status" value="1"/>
</dbReference>
<comment type="function">
    <text evidence="1">Necessary for flagellar biosynthesis. May be involved in translocation of the flagellum (By similarity).</text>
</comment>
<comment type="subcellular location">
    <subcellularLocation>
        <location evidence="1">Cell membrane</location>
        <topology evidence="1">Peripheral membrane protein</topology>
        <orientation evidence="1">Cytoplasmic side</orientation>
    </subcellularLocation>
</comment>
<comment type="similarity">
    <text evidence="2">Belongs to the GTP-binding SRP family.</text>
</comment>
<feature type="chain" id="PRO_0000101225" description="Flagellar biosynthesis protein FlhF">
    <location>
        <begin position="1"/>
        <end position="437"/>
    </location>
</feature>
<feature type="binding site" evidence="1">
    <location>
        <begin position="225"/>
        <end position="232"/>
    </location>
    <ligand>
        <name>GTP</name>
        <dbReference type="ChEBI" id="CHEBI:37565"/>
    </ligand>
</feature>
<feature type="binding site" evidence="1">
    <location>
        <begin position="303"/>
        <end position="307"/>
    </location>
    <ligand>
        <name>GTP</name>
        <dbReference type="ChEBI" id="CHEBI:37565"/>
    </ligand>
</feature>
<feature type="binding site" evidence="1">
    <location>
        <begin position="361"/>
        <end position="364"/>
    </location>
    <ligand>
        <name>GTP</name>
        <dbReference type="ChEBI" id="CHEBI:37565"/>
    </ligand>
</feature>
<protein>
    <recommendedName>
        <fullName>Flagellar biosynthesis protein FlhF</fullName>
    </recommendedName>
    <alternativeName>
        <fullName>Flagella-associated GTP-binding protein</fullName>
    </alternativeName>
</protein>
<sequence length="437" mass="47513">MQVKRFFAADMRQAMKLVRDELGADAAIIGNRRIAGGVELTAALDYKLSALAPRVPNAELEEELRKTHTRIATAQAELDHRQDSSDNNRQLFAGQSLTAAEPLIEPHVDAPEAAAAPAPAAAPVDPRLFDAMRSELSGLRELLEVQLGSLAWSQLQGSKPQQANLWRRLQRIGLSGPIARELLDLTAEIEEPRQAWRMLLAHLARMIDIPEIEPIEEGGVIAMVGPAGMGKTTTLAKLAARYVLKYGAQNLALVSMDSFRIGAQEQLKTLGRILNVPVTYVDPGQSLAAALEPLLRKRVVLIDTAGLQASDPALRMQLETLAGRGIAAKNYLVLATTSQKQVLTAAYHSYKRCGLAGCILTKLDETASLGDVLSLAISHELPVAYLTDGPRIPDDLHLPRGHQLVSRAVNVQQQDEPSEEAMADMFADLYHNPRRAG</sequence>
<proteinExistence type="inferred from homology"/>